<gene>
    <name type="primary">Sdf4</name>
    <name type="synonym">Cab45</name>
</gene>
<reference key="1">
    <citation type="journal article" date="1996" name="J. Cell Biol.">
        <title>Cab45, a novel (Ca2+)-binding protein localized to the Golgi lumen.</title>
        <authorList>
            <person name="Scherer P.E."/>
            <person name="Lederkremer G.Z."/>
            <person name="Williams S."/>
            <person name="Fogliano M."/>
            <person name="Baldini G."/>
            <person name="Lodish H.F."/>
        </authorList>
    </citation>
    <scope>NUCLEOTIDE SEQUENCE [MRNA] (ISOFORM 1)</scope>
    <scope>TISSUE SPECIFICITY</scope>
    <scope>VARIANT LYS-281</scope>
</reference>
<reference key="2">
    <citation type="journal article" date="1996" name="Genomics">
        <title>Characterization of novel secreted and membrane proteins isolated by the signal sequence trap method.</title>
        <authorList>
            <person name="Shirozu M."/>
            <person name="Tada H."/>
            <person name="Tashiro K."/>
            <person name="Nakamura T."/>
            <person name="Lopez N.D."/>
            <person name="Nazarea M."/>
            <person name="Hamada T."/>
            <person name="Sato T."/>
            <person name="Nakano T."/>
            <person name="Honjo T."/>
        </authorList>
    </citation>
    <scope>NUCLEOTIDE SEQUENCE [MRNA] (ISOFORM 1)</scope>
</reference>
<reference key="3">
    <citation type="journal article" date="2005" name="Science">
        <title>The transcriptional landscape of the mammalian genome.</title>
        <authorList>
            <person name="Carninci P."/>
            <person name="Kasukawa T."/>
            <person name="Katayama S."/>
            <person name="Gough J."/>
            <person name="Frith M.C."/>
            <person name="Maeda N."/>
            <person name="Oyama R."/>
            <person name="Ravasi T."/>
            <person name="Lenhard B."/>
            <person name="Wells C."/>
            <person name="Kodzius R."/>
            <person name="Shimokawa K."/>
            <person name="Bajic V.B."/>
            <person name="Brenner S.E."/>
            <person name="Batalov S."/>
            <person name="Forrest A.R."/>
            <person name="Zavolan M."/>
            <person name="Davis M.J."/>
            <person name="Wilming L.G."/>
            <person name="Aidinis V."/>
            <person name="Allen J.E."/>
            <person name="Ambesi-Impiombato A."/>
            <person name="Apweiler R."/>
            <person name="Aturaliya R.N."/>
            <person name="Bailey T.L."/>
            <person name="Bansal M."/>
            <person name="Baxter L."/>
            <person name="Beisel K.W."/>
            <person name="Bersano T."/>
            <person name="Bono H."/>
            <person name="Chalk A.M."/>
            <person name="Chiu K.P."/>
            <person name="Choudhary V."/>
            <person name="Christoffels A."/>
            <person name="Clutterbuck D.R."/>
            <person name="Crowe M.L."/>
            <person name="Dalla E."/>
            <person name="Dalrymple B.P."/>
            <person name="de Bono B."/>
            <person name="Della Gatta G."/>
            <person name="di Bernardo D."/>
            <person name="Down T."/>
            <person name="Engstrom P."/>
            <person name="Fagiolini M."/>
            <person name="Faulkner G."/>
            <person name="Fletcher C.F."/>
            <person name="Fukushima T."/>
            <person name="Furuno M."/>
            <person name="Futaki S."/>
            <person name="Gariboldi M."/>
            <person name="Georgii-Hemming P."/>
            <person name="Gingeras T.R."/>
            <person name="Gojobori T."/>
            <person name="Green R.E."/>
            <person name="Gustincich S."/>
            <person name="Harbers M."/>
            <person name="Hayashi Y."/>
            <person name="Hensch T.K."/>
            <person name="Hirokawa N."/>
            <person name="Hill D."/>
            <person name="Huminiecki L."/>
            <person name="Iacono M."/>
            <person name="Ikeo K."/>
            <person name="Iwama A."/>
            <person name="Ishikawa T."/>
            <person name="Jakt M."/>
            <person name="Kanapin A."/>
            <person name="Katoh M."/>
            <person name="Kawasawa Y."/>
            <person name="Kelso J."/>
            <person name="Kitamura H."/>
            <person name="Kitano H."/>
            <person name="Kollias G."/>
            <person name="Krishnan S.P."/>
            <person name="Kruger A."/>
            <person name="Kummerfeld S.K."/>
            <person name="Kurochkin I.V."/>
            <person name="Lareau L.F."/>
            <person name="Lazarevic D."/>
            <person name="Lipovich L."/>
            <person name="Liu J."/>
            <person name="Liuni S."/>
            <person name="McWilliam S."/>
            <person name="Madan Babu M."/>
            <person name="Madera M."/>
            <person name="Marchionni L."/>
            <person name="Matsuda H."/>
            <person name="Matsuzawa S."/>
            <person name="Miki H."/>
            <person name="Mignone F."/>
            <person name="Miyake S."/>
            <person name="Morris K."/>
            <person name="Mottagui-Tabar S."/>
            <person name="Mulder N."/>
            <person name="Nakano N."/>
            <person name="Nakauchi H."/>
            <person name="Ng P."/>
            <person name="Nilsson R."/>
            <person name="Nishiguchi S."/>
            <person name="Nishikawa S."/>
            <person name="Nori F."/>
            <person name="Ohara O."/>
            <person name="Okazaki Y."/>
            <person name="Orlando V."/>
            <person name="Pang K.C."/>
            <person name="Pavan W.J."/>
            <person name="Pavesi G."/>
            <person name="Pesole G."/>
            <person name="Petrovsky N."/>
            <person name="Piazza S."/>
            <person name="Reed J."/>
            <person name="Reid J.F."/>
            <person name="Ring B.Z."/>
            <person name="Ringwald M."/>
            <person name="Rost B."/>
            <person name="Ruan Y."/>
            <person name="Salzberg S.L."/>
            <person name="Sandelin A."/>
            <person name="Schneider C."/>
            <person name="Schoenbach C."/>
            <person name="Sekiguchi K."/>
            <person name="Semple C.A."/>
            <person name="Seno S."/>
            <person name="Sessa L."/>
            <person name="Sheng Y."/>
            <person name="Shibata Y."/>
            <person name="Shimada H."/>
            <person name="Shimada K."/>
            <person name="Silva D."/>
            <person name="Sinclair B."/>
            <person name="Sperling S."/>
            <person name="Stupka E."/>
            <person name="Sugiura K."/>
            <person name="Sultana R."/>
            <person name="Takenaka Y."/>
            <person name="Taki K."/>
            <person name="Tammoja K."/>
            <person name="Tan S.L."/>
            <person name="Tang S."/>
            <person name="Taylor M.S."/>
            <person name="Tegner J."/>
            <person name="Teichmann S.A."/>
            <person name="Ueda H.R."/>
            <person name="van Nimwegen E."/>
            <person name="Verardo R."/>
            <person name="Wei C.L."/>
            <person name="Yagi K."/>
            <person name="Yamanishi H."/>
            <person name="Zabarovsky E."/>
            <person name="Zhu S."/>
            <person name="Zimmer A."/>
            <person name="Hide W."/>
            <person name="Bult C."/>
            <person name="Grimmond S.M."/>
            <person name="Teasdale R.D."/>
            <person name="Liu E.T."/>
            <person name="Brusic V."/>
            <person name="Quackenbush J."/>
            <person name="Wahlestedt C."/>
            <person name="Mattick J.S."/>
            <person name="Hume D.A."/>
            <person name="Kai C."/>
            <person name="Sasaki D."/>
            <person name="Tomaru Y."/>
            <person name="Fukuda S."/>
            <person name="Kanamori-Katayama M."/>
            <person name="Suzuki M."/>
            <person name="Aoki J."/>
            <person name="Arakawa T."/>
            <person name="Iida J."/>
            <person name="Imamura K."/>
            <person name="Itoh M."/>
            <person name="Kato T."/>
            <person name="Kawaji H."/>
            <person name="Kawagashira N."/>
            <person name="Kawashima T."/>
            <person name="Kojima M."/>
            <person name="Kondo S."/>
            <person name="Konno H."/>
            <person name="Nakano K."/>
            <person name="Ninomiya N."/>
            <person name="Nishio T."/>
            <person name="Okada M."/>
            <person name="Plessy C."/>
            <person name="Shibata K."/>
            <person name="Shiraki T."/>
            <person name="Suzuki S."/>
            <person name="Tagami M."/>
            <person name="Waki K."/>
            <person name="Watahiki A."/>
            <person name="Okamura-Oho Y."/>
            <person name="Suzuki H."/>
            <person name="Kawai J."/>
            <person name="Hayashizaki Y."/>
        </authorList>
    </citation>
    <scope>NUCLEOTIDE SEQUENCE [LARGE SCALE MRNA] (ISOFORMS 1 AND 2)</scope>
    <source>
        <strain>C57BL/6J</strain>
        <tissue>Bone marrow</tissue>
        <tissue>Egg</tissue>
    </source>
</reference>
<reference key="4">
    <citation type="journal article" date="2009" name="PLoS Biol.">
        <title>Lineage-specific biology revealed by a finished genome assembly of the mouse.</title>
        <authorList>
            <person name="Church D.M."/>
            <person name="Goodstadt L."/>
            <person name="Hillier L.W."/>
            <person name="Zody M.C."/>
            <person name="Goldstein S."/>
            <person name="She X."/>
            <person name="Bult C.J."/>
            <person name="Agarwala R."/>
            <person name="Cherry J.L."/>
            <person name="DiCuccio M."/>
            <person name="Hlavina W."/>
            <person name="Kapustin Y."/>
            <person name="Meric P."/>
            <person name="Maglott D."/>
            <person name="Birtle Z."/>
            <person name="Marques A.C."/>
            <person name="Graves T."/>
            <person name="Zhou S."/>
            <person name="Teague B."/>
            <person name="Potamousis K."/>
            <person name="Churas C."/>
            <person name="Place M."/>
            <person name="Herschleb J."/>
            <person name="Runnheim R."/>
            <person name="Forrest D."/>
            <person name="Amos-Landgraf J."/>
            <person name="Schwartz D.C."/>
            <person name="Cheng Z."/>
            <person name="Lindblad-Toh K."/>
            <person name="Eichler E.E."/>
            <person name="Ponting C.P."/>
        </authorList>
    </citation>
    <scope>NUCLEOTIDE SEQUENCE [LARGE SCALE GENOMIC DNA]</scope>
    <source>
        <strain>C57BL/6J</strain>
    </source>
</reference>
<reference key="5">
    <citation type="submission" date="2005-07" db="EMBL/GenBank/DDBJ databases">
        <authorList>
            <person name="Mural R.J."/>
            <person name="Adams M.D."/>
            <person name="Myers E.W."/>
            <person name="Smith H.O."/>
            <person name="Venter J.C."/>
        </authorList>
    </citation>
    <scope>NUCLEOTIDE SEQUENCE [LARGE SCALE GENOMIC DNA]</scope>
</reference>
<reference key="6">
    <citation type="journal article" date="2004" name="Genome Res.">
        <title>The status, quality, and expansion of the NIH full-length cDNA project: the Mammalian Gene Collection (MGC).</title>
        <authorList>
            <consortium name="The MGC Project Team"/>
        </authorList>
    </citation>
    <scope>NUCLEOTIDE SEQUENCE [LARGE SCALE MRNA] (ISOFORM 1)</scope>
    <source>
        <strain>C57BL/6J</strain>
        <tissue>Brain</tissue>
    </source>
</reference>
<reference key="7">
    <citation type="journal article" date="2006" name="J. Cell Sci.">
        <title>Lumenal protein sorting to the constitutive secretory pathway of a regulated secretory cell.</title>
        <authorList>
            <person name="Lara-Lemus R."/>
            <person name="Liu M."/>
            <person name="Turner M.D."/>
            <person name="Scherer P."/>
            <person name="Stenbeck G."/>
            <person name="Iyengar P."/>
            <person name="Arvan P."/>
        </authorList>
    </citation>
    <scope>SUBCELLULAR LOCATION</scope>
</reference>
<reference key="8">
    <citation type="journal article" date="2010" name="Cell">
        <title>A tissue-specific atlas of mouse protein phosphorylation and expression.</title>
        <authorList>
            <person name="Huttlin E.L."/>
            <person name="Jedrychowski M.P."/>
            <person name="Elias J.E."/>
            <person name="Goswami T."/>
            <person name="Rad R."/>
            <person name="Beausoleil S.A."/>
            <person name="Villen J."/>
            <person name="Haas W."/>
            <person name="Sowa M.E."/>
            <person name="Gygi S.P."/>
        </authorList>
    </citation>
    <scope>IDENTIFICATION BY MASS SPECTROMETRY [LARGE SCALE ANALYSIS]</scope>
    <source>
        <tissue>Kidney</tissue>
        <tissue>Liver</tissue>
        <tissue>Pancreas</tissue>
        <tissue>Testis</tissue>
    </source>
</reference>
<feature type="signal peptide" evidence="2">
    <location>
        <begin position="1"/>
        <end position="35"/>
    </location>
</feature>
<feature type="chain" id="PRO_0000004157" description="45 kDa calcium-binding protein">
    <location>
        <begin position="36"/>
        <end position="361"/>
    </location>
</feature>
<feature type="domain" description="EF-hand 1" evidence="3">
    <location>
        <begin position="97"/>
        <end position="132"/>
    </location>
</feature>
<feature type="domain" description="EF-hand 2" evidence="3">
    <location>
        <begin position="136"/>
        <end position="171"/>
    </location>
</feature>
<feature type="domain" description="EF-hand 3" evidence="7">
    <location>
        <begin position="196"/>
        <end position="231"/>
    </location>
</feature>
<feature type="domain" description="EF-hand 4" evidence="3">
    <location>
        <begin position="232"/>
        <end position="267"/>
    </location>
</feature>
<feature type="domain" description="EF-hand 5" evidence="3">
    <location>
        <begin position="277"/>
        <end position="312"/>
    </location>
</feature>
<feature type="domain" description="EF-hand 6" evidence="3">
    <location>
        <begin position="313"/>
        <end position="348"/>
    </location>
</feature>
<feature type="region of interest" description="Necessary for intracellular retention in Golgi apparatus lumen">
    <location>
        <begin position="308"/>
        <end position="361"/>
    </location>
</feature>
<feature type="binding site" evidence="3">
    <location>
        <position position="110"/>
    </location>
    <ligand>
        <name>Ca(2+)</name>
        <dbReference type="ChEBI" id="CHEBI:29108"/>
        <label>1</label>
    </ligand>
</feature>
<feature type="binding site" evidence="3">
    <location>
        <position position="112"/>
    </location>
    <ligand>
        <name>Ca(2+)</name>
        <dbReference type="ChEBI" id="CHEBI:29108"/>
        <label>1</label>
    </ligand>
</feature>
<feature type="binding site" evidence="3">
    <location>
        <position position="114"/>
    </location>
    <ligand>
        <name>Ca(2+)</name>
        <dbReference type="ChEBI" id="CHEBI:29108"/>
        <label>1</label>
    </ligand>
</feature>
<feature type="binding site" evidence="3">
    <location>
        <position position="116"/>
    </location>
    <ligand>
        <name>Ca(2+)</name>
        <dbReference type="ChEBI" id="CHEBI:29108"/>
        <label>1</label>
    </ligand>
</feature>
<feature type="binding site" evidence="3">
    <location>
        <position position="121"/>
    </location>
    <ligand>
        <name>Ca(2+)</name>
        <dbReference type="ChEBI" id="CHEBI:29108"/>
        <label>1</label>
    </ligand>
</feature>
<feature type="binding site" evidence="3">
    <location>
        <position position="149"/>
    </location>
    <ligand>
        <name>Ca(2+)</name>
        <dbReference type="ChEBI" id="CHEBI:29108"/>
        <label>2</label>
    </ligand>
</feature>
<feature type="binding site" evidence="3">
    <location>
        <position position="151"/>
    </location>
    <ligand>
        <name>Ca(2+)</name>
        <dbReference type="ChEBI" id="CHEBI:29108"/>
        <label>2</label>
    </ligand>
</feature>
<feature type="binding site" evidence="3">
    <location>
        <position position="153"/>
    </location>
    <ligand>
        <name>Ca(2+)</name>
        <dbReference type="ChEBI" id="CHEBI:29108"/>
        <label>2</label>
    </ligand>
</feature>
<feature type="binding site" evidence="3">
    <location>
        <position position="155"/>
    </location>
    <ligand>
        <name>Ca(2+)</name>
        <dbReference type="ChEBI" id="CHEBI:29108"/>
        <label>2</label>
    </ligand>
</feature>
<feature type="binding site" evidence="3">
    <location>
        <position position="160"/>
    </location>
    <ligand>
        <name>Ca(2+)</name>
        <dbReference type="ChEBI" id="CHEBI:29108"/>
        <label>2</label>
    </ligand>
</feature>
<feature type="binding site" evidence="7">
    <location>
        <position position="212"/>
    </location>
    <ligand>
        <name>Ca(2+)</name>
        <dbReference type="ChEBI" id="CHEBI:29108"/>
        <label>3</label>
    </ligand>
</feature>
<feature type="binding site" evidence="7">
    <location>
        <position position="219"/>
    </location>
    <ligand>
        <name>Ca(2+)</name>
        <dbReference type="ChEBI" id="CHEBI:29108"/>
        <label>3</label>
    </ligand>
</feature>
<feature type="binding site" evidence="3">
    <location>
        <position position="245"/>
    </location>
    <ligand>
        <name>Ca(2+)</name>
        <dbReference type="ChEBI" id="CHEBI:29108"/>
        <label>4</label>
    </ligand>
</feature>
<feature type="binding site" evidence="3">
    <location>
        <position position="247"/>
    </location>
    <ligand>
        <name>Ca(2+)</name>
        <dbReference type="ChEBI" id="CHEBI:29108"/>
        <label>4</label>
    </ligand>
</feature>
<feature type="binding site" evidence="3">
    <location>
        <position position="249"/>
    </location>
    <ligand>
        <name>Ca(2+)</name>
        <dbReference type="ChEBI" id="CHEBI:29108"/>
        <label>4</label>
    </ligand>
</feature>
<feature type="binding site" evidence="3">
    <location>
        <position position="251"/>
    </location>
    <ligand>
        <name>Ca(2+)</name>
        <dbReference type="ChEBI" id="CHEBI:29108"/>
        <label>4</label>
    </ligand>
</feature>
<feature type="binding site" evidence="3">
    <location>
        <position position="256"/>
    </location>
    <ligand>
        <name>Ca(2+)</name>
        <dbReference type="ChEBI" id="CHEBI:29108"/>
        <label>4</label>
    </ligand>
</feature>
<feature type="binding site" evidence="3">
    <location>
        <position position="290"/>
    </location>
    <ligand>
        <name>Ca(2+)</name>
        <dbReference type="ChEBI" id="CHEBI:29108"/>
        <label>5</label>
    </ligand>
</feature>
<feature type="binding site" evidence="3">
    <location>
        <position position="292"/>
    </location>
    <ligand>
        <name>Ca(2+)</name>
        <dbReference type="ChEBI" id="CHEBI:29108"/>
        <label>5</label>
    </ligand>
</feature>
<feature type="binding site" evidence="3">
    <location>
        <position position="294"/>
    </location>
    <ligand>
        <name>Ca(2+)</name>
        <dbReference type="ChEBI" id="CHEBI:29108"/>
        <label>5</label>
    </ligand>
</feature>
<feature type="binding site" evidence="3">
    <location>
        <position position="301"/>
    </location>
    <ligand>
        <name>Ca(2+)</name>
        <dbReference type="ChEBI" id="CHEBI:29108"/>
        <label>5</label>
    </ligand>
</feature>
<feature type="binding site" evidence="3">
    <location>
        <position position="326"/>
    </location>
    <ligand>
        <name>Ca(2+)</name>
        <dbReference type="ChEBI" id="CHEBI:29108"/>
        <label>6</label>
    </ligand>
</feature>
<feature type="binding site" evidence="3">
    <location>
        <position position="328"/>
    </location>
    <ligand>
        <name>Ca(2+)</name>
        <dbReference type="ChEBI" id="CHEBI:29108"/>
        <label>6</label>
    </ligand>
</feature>
<feature type="binding site" evidence="3">
    <location>
        <position position="330"/>
    </location>
    <ligand>
        <name>Ca(2+)</name>
        <dbReference type="ChEBI" id="CHEBI:29108"/>
        <label>6</label>
    </ligand>
</feature>
<feature type="binding site" evidence="3">
    <location>
        <position position="332"/>
    </location>
    <ligand>
        <name>Ca(2+)</name>
        <dbReference type="ChEBI" id="CHEBI:29108"/>
        <label>6</label>
    </ligand>
</feature>
<feature type="binding site" evidence="3">
    <location>
        <position position="337"/>
    </location>
    <ligand>
        <name>Ca(2+)</name>
        <dbReference type="ChEBI" id="CHEBI:29108"/>
        <label>6</label>
    </ligand>
</feature>
<feature type="modified residue" description="Phosphoserine" evidence="1">
    <location>
        <position position="98"/>
    </location>
</feature>
<feature type="modified residue" description="Phosphothreonine" evidence="1">
    <location>
        <position position="192"/>
    </location>
</feature>
<feature type="modified residue" description="Phosphothreonine" evidence="1">
    <location>
        <position position="216"/>
    </location>
</feature>
<feature type="modified residue" description="Phosphothreonine" evidence="1">
    <location>
        <position position="264"/>
    </location>
</feature>
<feature type="modified residue" description="Phosphothreonine" evidence="1">
    <location>
        <position position="298"/>
    </location>
</feature>
<feature type="glycosylation site" description="N-linked (GlcNAc...) asparagine" evidence="2">
    <location>
        <position position="39"/>
    </location>
</feature>
<feature type="splice variant" id="VSP_037450" description="In isoform 2." evidence="6">
    <original>TQEVLGNLRDRWYQADNPPADLLLTED</original>
    <variation>IALHFLLLTGGPLSCSSGETSICLSRL</variation>
    <location>
        <begin position="192"/>
        <end position="218"/>
    </location>
</feature>
<feature type="splice variant" id="VSP_037451" description="In isoform 2." evidence="6">
    <location>
        <begin position="219"/>
        <end position="361"/>
    </location>
</feature>
<feature type="sequence variant" description="In CAB45A." evidence="5">
    <original>R</original>
    <variation>K</variation>
    <location>
        <position position="281"/>
    </location>
</feature>
<accession>Q61112</accession>
<accession>Q3TK84</accession>
<accession>Q3TQP8</accession>
<accession>Q61113</accession>
<evidence type="ECO:0000250" key="1">
    <source>
        <dbReference type="UniProtKB" id="Q9BRK5"/>
    </source>
</evidence>
<evidence type="ECO:0000255" key="2"/>
<evidence type="ECO:0000255" key="3">
    <source>
        <dbReference type="PROSITE-ProRule" id="PRU00448"/>
    </source>
</evidence>
<evidence type="ECO:0000269" key="4">
    <source>
    </source>
</evidence>
<evidence type="ECO:0000269" key="5">
    <source>
    </source>
</evidence>
<evidence type="ECO:0000303" key="6">
    <source>
    </source>
</evidence>
<evidence type="ECO:0000305" key="7"/>
<name>CAB45_MOUSE</name>
<proteinExistence type="evidence at protein level"/>
<protein>
    <recommendedName>
        <fullName>45 kDa calcium-binding protein</fullName>
        <shortName>Cab45</shortName>
    </recommendedName>
    <alternativeName>
        <fullName>Stromal cell-derived factor 4</fullName>
        <shortName>SDF-4</shortName>
    </alternativeName>
</protein>
<sequence>MVWLVAMTPRQSSLCGLAAHGLWFLGLVLLMDATARPANHSSTRERAANREENEIMPPDHLNGVKLEMDGHLNKDFHQEVFLGKDMDGFDEDSEPRRSRRKLMVIFSKVDVNTDRRISAKEMQHWIMEKTAEHFQEAVKENKLHFRAVDPDGDGHVSWDEYKVKFLASKGHNEREIAEAIKNHEELKVDEETQEVLGNLRDRWYQADNPPADLLLTEDEFLSFLHPEHSRGMLKFMVKEIFRDLDQDGDKQLSLPEFISLPVGTVENQQGQDIDDNWVKDRKKEFEELIDSNHDGIVTMEELENYMDPMNEYNALNEAKQMIAIADENQNHHLEPEEILKYSEFFTGSKLMDYARNVHEEF</sequence>
<comment type="function">
    <text>May regulate calcium-dependent activities in the endoplasmic reticulum lumen or post-ER compartment.</text>
</comment>
<comment type="subcellular location">
    <subcellularLocation>
        <location evidence="4">Golgi apparatus lumen</location>
    </subcellularLocation>
</comment>
<comment type="alternative products">
    <event type="alternative splicing"/>
    <isoform>
        <id>Q61112-1</id>
        <name>1</name>
        <sequence type="displayed"/>
    </isoform>
    <isoform>
        <id>Q61112-2</id>
        <name>2</name>
        <sequence type="described" ref="VSP_037450 VSP_037451"/>
    </isoform>
</comment>
<comment type="tissue specificity">
    <text evidence="5">Ubiquitous.</text>
</comment>
<comment type="domain">
    <text>Binds calcium, probably via its EF-hands.</text>
</comment>
<comment type="similarity">
    <text evidence="7">Belongs to the CREC family.</text>
</comment>
<keyword id="KW-0025">Alternative splicing</keyword>
<keyword id="KW-0106">Calcium</keyword>
<keyword id="KW-0325">Glycoprotein</keyword>
<keyword id="KW-0333">Golgi apparatus</keyword>
<keyword id="KW-0479">Metal-binding</keyword>
<keyword id="KW-0597">Phosphoprotein</keyword>
<keyword id="KW-1185">Reference proteome</keyword>
<keyword id="KW-0677">Repeat</keyword>
<keyword id="KW-0732">Signal</keyword>
<dbReference type="EMBL" id="U45977">
    <property type="protein sequence ID" value="AAB01812.1"/>
    <property type="molecule type" value="mRNA"/>
</dbReference>
<dbReference type="EMBL" id="U45978">
    <property type="protein sequence ID" value="AAB01813.1"/>
    <property type="molecule type" value="mRNA"/>
</dbReference>
<dbReference type="EMBL" id="D50461">
    <property type="protein sequence ID" value="BAA09052.1"/>
    <property type="molecule type" value="mRNA"/>
</dbReference>
<dbReference type="EMBL" id="AK157860">
    <property type="protein sequence ID" value="BAE34238.1"/>
    <property type="molecule type" value="mRNA"/>
</dbReference>
<dbReference type="EMBL" id="AK163400">
    <property type="protein sequence ID" value="BAE37334.1"/>
    <property type="molecule type" value="mRNA"/>
</dbReference>
<dbReference type="EMBL" id="AK167113">
    <property type="protein sequence ID" value="BAE39261.1"/>
    <property type="molecule type" value="mRNA"/>
</dbReference>
<dbReference type="EMBL" id="AL627204">
    <property type="status" value="NOT_ANNOTATED_CDS"/>
    <property type="molecule type" value="Genomic_DNA"/>
</dbReference>
<dbReference type="EMBL" id="CH466594">
    <property type="protein sequence ID" value="EDL15066.1"/>
    <property type="molecule type" value="Genomic_DNA"/>
</dbReference>
<dbReference type="EMBL" id="BC068152">
    <property type="protein sequence ID" value="AAH68152.1"/>
    <property type="molecule type" value="mRNA"/>
</dbReference>
<dbReference type="CCDS" id="CCDS19054.1">
    <molecule id="Q61112-1"/>
</dbReference>
<dbReference type="CCDS" id="CCDS80198.1">
    <molecule id="Q61112-2"/>
</dbReference>
<dbReference type="RefSeq" id="NP_001289396.1">
    <molecule id="Q61112-1"/>
    <property type="nucleotide sequence ID" value="NM_001302467.1"/>
</dbReference>
<dbReference type="RefSeq" id="NP_001289397.1">
    <molecule id="Q61112-1"/>
    <property type="nucleotide sequence ID" value="NM_001302468.1"/>
</dbReference>
<dbReference type="RefSeq" id="NP_001289398.1">
    <molecule id="Q61112-2"/>
    <property type="nucleotide sequence ID" value="NM_001302469.1"/>
</dbReference>
<dbReference type="RefSeq" id="NP_035471.1">
    <molecule id="Q61112-1"/>
    <property type="nucleotide sequence ID" value="NM_011341.5"/>
</dbReference>
<dbReference type="BioGRID" id="203141">
    <property type="interactions" value="3"/>
</dbReference>
<dbReference type="FunCoup" id="Q61112">
    <property type="interactions" value="1297"/>
</dbReference>
<dbReference type="STRING" id="10090.ENSMUSP00000053175"/>
<dbReference type="GlyCosmos" id="Q61112">
    <property type="glycosylation" value="1 site, No reported glycans"/>
</dbReference>
<dbReference type="GlyGen" id="Q61112">
    <property type="glycosylation" value="1 site"/>
</dbReference>
<dbReference type="iPTMnet" id="Q61112"/>
<dbReference type="PhosphoSitePlus" id="Q61112"/>
<dbReference type="jPOST" id="Q61112"/>
<dbReference type="PaxDb" id="10090-ENSMUSP00000053175"/>
<dbReference type="PeptideAtlas" id="Q61112"/>
<dbReference type="ProteomicsDB" id="273569">
    <molecule id="Q61112-1"/>
</dbReference>
<dbReference type="ProteomicsDB" id="273570">
    <molecule id="Q61112-2"/>
</dbReference>
<dbReference type="Pumba" id="Q61112"/>
<dbReference type="Antibodypedia" id="26159">
    <property type="antibodies" value="286 antibodies from 30 providers"/>
</dbReference>
<dbReference type="DNASU" id="20318"/>
<dbReference type="Ensembl" id="ENSMUST00000050078.13">
    <molecule id="Q61112-1"/>
    <property type="protein sequence ID" value="ENSMUSP00000053175.7"/>
    <property type="gene ID" value="ENSMUSG00000029076.15"/>
</dbReference>
<dbReference type="Ensembl" id="ENSMUST00000097734.11">
    <molecule id="Q61112-2"/>
    <property type="protein sequence ID" value="ENSMUSP00000095340.5"/>
    <property type="gene ID" value="ENSMUSG00000029076.15"/>
</dbReference>
<dbReference type="Ensembl" id="ENSMUST00000105578.2">
    <molecule id="Q61112-1"/>
    <property type="protein sequence ID" value="ENSMUSP00000101203.2"/>
    <property type="gene ID" value="ENSMUSG00000029076.15"/>
</dbReference>
<dbReference type="Ensembl" id="ENSMUST00000105579.8">
    <molecule id="Q61112-1"/>
    <property type="protein sequence ID" value="ENSMUSP00000101204.2"/>
    <property type="gene ID" value="ENSMUSG00000029076.15"/>
</dbReference>
<dbReference type="GeneID" id="20318"/>
<dbReference type="KEGG" id="mmu:20318"/>
<dbReference type="UCSC" id="uc008wfr.2">
    <molecule id="Q61112-1"/>
    <property type="organism name" value="mouse"/>
</dbReference>
<dbReference type="UCSC" id="uc056zys.1">
    <molecule id="Q61112-2"/>
    <property type="organism name" value="mouse"/>
</dbReference>
<dbReference type="AGR" id="MGI:108079"/>
<dbReference type="CTD" id="51150"/>
<dbReference type="MGI" id="MGI:108079">
    <property type="gene designation" value="Sdf4"/>
</dbReference>
<dbReference type="VEuPathDB" id="HostDB:ENSMUSG00000029076"/>
<dbReference type="eggNOG" id="KOG4251">
    <property type="taxonomic scope" value="Eukaryota"/>
</dbReference>
<dbReference type="GeneTree" id="ENSGT01010000222360"/>
<dbReference type="HOGENOM" id="CLU_044718_1_0_1"/>
<dbReference type="InParanoid" id="Q61112"/>
<dbReference type="OMA" id="MNEYSAL"/>
<dbReference type="OrthoDB" id="9978834at2759"/>
<dbReference type="PhylomeDB" id="Q61112"/>
<dbReference type="TreeFam" id="TF314849"/>
<dbReference type="BioGRID-ORCS" id="20318">
    <property type="hits" value="2 hits in 78 CRISPR screens"/>
</dbReference>
<dbReference type="ChiTaRS" id="Sdf4">
    <property type="organism name" value="mouse"/>
</dbReference>
<dbReference type="PRO" id="PR:Q61112"/>
<dbReference type="Proteomes" id="UP000000589">
    <property type="component" value="Chromosome 4"/>
</dbReference>
<dbReference type="RNAct" id="Q61112">
    <property type="molecule type" value="protein"/>
</dbReference>
<dbReference type="Bgee" id="ENSMUSG00000029076">
    <property type="expression patterns" value="Expressed in stroma of bone marrow and 241 other cell types or tissues"/>
</dbReference>
<dbReference type="GO" id="GO:0005796">
    <property type="term" value="C:Golgi lumen"/>
    <property type="evidence" value="ECO:0000314"/>
    <property type="project" value="BHF-UCL"/>
</dbReference>
<dbReference type="GO" id="GO:0005770">
    <property type="term" value="C:late endosome"/>
    <property type="evidence" value="ECO:0000315"/>
    <property type="project" value="BHF-UCL"/>
</dbReference>
<dbReference type="GO" id="GO:0005509">
    <property type="term" value="F:calcium ion binding"/>
    <property type="evidence" value="ECO:0000314"/>
    <property type="project" value="BHF-UCL"/>
</dbReference>
<dbReference type="GO" id="GO:0021549">
    <property type="term" value="P:cerebellum development"/>
    <property type="evidence" value="ECO:0000250"/>
    <property type="project" value="BHF-UCL"/>
</dbReference>
<dbReference type="GO" id="GO:0045444">
    <property type="term" value="P:fat cell differentiation"/>
    <property type="evidence" value="ECO:0000270"/>
    <property type="project" value="BHF-UCL"/>
</dbReference>
<dbReference type="GO" id="GO:0045471">
    <property type="term" value="P:response to ethanol"/>
    <property type="evidence" value="ECO:0000250"/>
    <property type="project" value="BHF-UCL"/>
</dbReference>
<dbReference type="GO" id="GO:0009650">
    <property type="term" value="P:UV protection"/>
    <property type="evidence" value="ECO:0000250"/>
    <property type="project" value="BHF-UCL"/>
</dbReference>
<dbReference type="CDD" id="cd16225">
    <property type="entry name" value="EFh_CREC_cab45"/>
    <property type="match status" value="1"/>
</dbReference>
<dbReference type="FunFam" id="1.10.238.10:FF:000120">
    <property type="entry name" value="45 kDa calcium-binding protein"/>
    <property type="match status" value="1"/>
</dbReference>
<dbReference type="FunFam" id="1.10.238.10:FF:000207">
    <property type="entry name" value="Putative 45 kDa calcium-binding protein"/>
    <property type="match status" value="1"/>
</dbReference>
<dbReference type="Gene3D" id="1.10.238.10">
    <property type="entry name" value="EF-hand"/>
    <property type="match status" value="3"/>
</dbReference>
<dbReference type="InterPro" id="IPR027240">
    <property type="entry name" value="CAB45_EFh"/>
</dbReference>
<dbReference type="InterPro" id="IPR011992">
    <property type="entry name" value="EF-hand-dom_pair"/>
</dbReference>
<dbReference type="InterPro" id="IPR018247">
    <property type="entry name" value="EF_Hand_1_Ca_BS"/>
</dbReference>
<dbReference type="InterPro" id="IPR002048">
    <property type="entry name" value="EF_hand_dom"/>
</dbReference>
<dbReference type="PANTHER" id="PTHR10827:SF98">
    <property type="entry name" value="45 KDA CALCIUM-BINDING PROTEIN"/>
    <property type="match status" value="1"/>
</dbReference>
<dbReference type="PANTHER" id="PTHR10827">
    <property type="entry name" value="RETICULOCALBIN"/>
    <property type="match status" value="1"/>
</dbReference>
<dbReference type="Pfam" id="PF13202">
    <property type="entry name" value="EF-hand_5"/>
    <property type="match status" value="1"/>
</dbReference>
<dbReference type="Pfam" id="PF13499">
    <property type="entry name" value="EF-hand_7"/>
    <property type="match status" value="1"/>
</dbReference>
<dbReference type="SMART" id="SM00054">
    <property type="entry name" value="EFh"/>
    <property type="match status" value="5"/>
</dbReference>
<dbReference type="SUPFAM" id="SSF47473">
    <property type="entry name" value="EF-hand"/>
    <property type="match status" value="2"/>
</dbReference>
<dbReference type="PROSITE" id="PS00018">
    <property type="entry name" value="EF_HAND_1"/>
    <property type="match status" value="5"/>
</dbReference>
<dbReference type="PROSITE" id="PS50222">
    <property type="entry name" value="EF_HAND_2"/>
    <property type="match status" value="5"/>
</dbReference>
<organism>
    <name type="scientific">Mus musculus</name>
    <name type="common">Mouse</name>
    <dbReference type="NCBI Taxonomy" id="10090"/>
    <lineage>
        <taxon>Eukaryota</taxon>
        <taxon>Metazoa</taxon>
        <taxon>Chordata</taxon>
        <taxon>Craniata</taxon>
        <taxon>Vertebrata</taxon>
        <taxon>Euteleostomi</taxon>
        <taxon>Mammalia</taxon>
        <taxon>Eutheria</taxon>
        <taxon>Euarchontoglires</taxon>
        <taxon>Glires</taxon>
        <taxon>Rodentia</taxon>
        <taxon>Myomorpha</taxon>
        <taxon>Muroidea</taxon>
        <taxon>Muridae</taxon>
        <taxon>Murinae</taxon>
        <taxon>Mus</taxon>
        <taxon>Mus</taxon>
    </lineage>
</organism>